<proteinExistence type="inferred from homology"/>
<comment type="catalytic activity">
    <reaction evidence="1">
        <text>adenine + H2O + H(+) = hypoxanthine + NH4(+)</text>
        <dbReference type="Rhea" id="RHEA:23688"/>
        <dbReference type="ChEBI" id="CHEBI:15377"/>
        <dbReference type="ChEBI" id="CHEBI:15378"/>
        <dbReference type="ChEBI" id="CHEBI:16708"/>
        <dbReference type="ChEBI" id="CHEBI:17368"/>
        <dbReference type="ChEBI" id="CHEBI:28938"/>
        <dbReference type="EC" id="3.5.4.2"/>
    </reaction>
</comment>
<comment type="cofactor">
    <cofactor evidence="1">
        <name>Mn(2+)</name>
        <dbReference type="ChEBI" id="CHEBI:29035"/>
    </cofactor>
</comment>
<comment type="subunit">
    <text evidence="1">Homodimer.</text>
</comment>
<comment type="similarity">
    <text evidence="1">Belongs to the metallo-dependent hydrolases superfamily. Adenine deaminase family.</text>
</comment>
<evidence type="ECO:0000255" key="1">
    <source>
        <dbReference type="HAMAP-Rule" id="MF_01518"/>
    </source>
</evidence>
<gene>
    <name evidence="1" type="primary">ade</name>
    <name type="ordered locus">Spro_1116</name>
</gene>
<dbReference type="EC" id="3.5.4.2" evidence="1"/>
<dbReference type="EMBL" id="CP000826">
    <property type="protein sequence ID" value="ABV40220.1"/>
    <property type="molecule type" value="Genomic_DNA"/>
</dbReference>
<dbReference type="SMR" id="A8GAT0"/>
<dbReference type="STRING" id="399741.Spro_1116"/>
<dbReference type="KEGG" id="spe:Spro_1116"/>
<dbReference type="eggNOG" id="COG1001">
    <property type="taxonomic scope" value="Bacteria"/>
</dbReference>
<dbReference type="HOGENOM" id="CLU_027935_0_0_6"/>
<dbReference type="OrthoDB" id="9766983at2"/>
<dbReference type="GO" id="GO:0000034">
    <property type="term" value="F:adenine deaminase activity"/>
    <property type="evidence" value="ECO:0007669"/>
    <property type="project" value="UniProtKB-UniRule"/>
</dbReference>
<dbReference type="GO" id="GO:0006146">
    <property type="term" value="P:adenine catabolic process"/>
    <property type="evidence" value="ECO:0007669"/>
    <property type="project" value="InterPro"/>
</dbReference>
<dbReference type="Gene3D" id="3.20.20.140">
    <property type="entry name" value="Metal-dependent hydrolases"/>
    <property type="match status" value="1"/>
</dbReference>
<dbReference type="Gene3D" id="2.30.40.10">
    <property type="entry name" value="Urease, subunit C, domain 1"/>
    <property type="match status" value="1"/>
</dbReference>
<dbReference type="HAMAP" id="MF_01518">
    <property type="entry name" value="Adenine_deamin"/>
    <property type="match status" value="1"/>
</dbReference>
<dbReference type="InterPro" id="IPR006679">
    <property type="entry name" value="Adenine_deam"/>
</dbReference>
<dbReference type="InterPro" id="IPR026912">
    <property type="entry name" value="Adenine_deam_C"/>
</dbReference>
<dbReference type="InterPro" id="IPR006680">
    <property type="entry name" value="Amidohydro-rel"/>
</dbReference>
<dbReference type="InterPro" id="IPR011059">
    <property type="entry name" value="Metal-dep_hydrolase_composite"/>
</dbReference>
<dbReference type="InterPro" id="IPR032466">
    <property type="entry name" value="Metal_Hydrolase"/>
</dbReference>
<dbReference type="PANTHER" id="PTHR11113:SF2">
    <property type="entry name" value="ADENINE DEAMINASE"/>
    <property type="match status" value="1"/>
</dbReference>
<dbReference type="PANTHER" id="PTHR11113">
    <property type="entry name" value="N-ACETYLGLUCOSAMINE-6-PHOSPHATE DEACETYLASE"/>
    <property type="match status" value="1"/>
</dbReference>
<dbReference type="Pfam" id="PF13382">
    <property type="entry name" value="Adenine_deam_C"/>
    <property type="match status" value="1"/>
</dbReference>
<dbReference type="Pfam" id="PF01979">
    <property type="entry name" value="Amidohydro_1"/>
    <property type="match status" value="1"/>
</dbReference>
<dbReference type="SUPFAM" id="SSF51338">
    <property type="entry name" value="Composite domain of metallo-dependent hydrolases"/>
    <property type="match status" value="1"/>
</dbReference>
<dbReference type="SUPFAM" id="SSF51556">
    <property type="entry name" value="Metallo-dependent hydrolases"/>
    <property type="match status" value="1"/>
</dbReference>
<name>ADEC_SERP5</name>
<protein>
    <recommendedName>
        <fullName evidence="1">Adenine deaminase</fullName>
        <shortName evidence="1">Adenase</shortName>
        <shortName evidence="1">Adenine aminase</shortName>
        <ecNumber evidence="1">3.5.4.2</ecNumber>
    </recommendedName>
</protein>
<organism>
    <name type="scientific">Serratia proteamaculans (strain 568)</name>
    <dbReference type="NCBI Taxonomy" id="399741"/>
    <lineage>
        <taxon>Bacteria</taxon>
        <taxon>Pseudomonadati</taxon>
        <taxon>Pseudomonadota</taxon>
        <taxon>Gammaproteobacteria</taxon>
        <taxon>Enterobacterales</taxon>
        <taxon>Yersiniaceae</taxon>
        <taxon>Serratia</taxon>
    </lineage>
</organism>
<feature type="chain" id="PRO_0000318549" description="Adenine deaminase">
    <location>
        <begin position="1"/>
        <end position="595"/>
    </location>
</feature>
<reference key="1">
    <citation type="submission" date="2007-09" db="EMBL/GenBank/DDBJ databases">
        <title>Complete sequence of chromosome of Serratia proteamaculans 568.</title>
        <authorList>
            <consortium name="US DOE Joint Genome Institute"/>
            <person name="Copeland A."/>
            <person name="Lucas S."/>
            <person name="Lapidus A."/>
            <person name="Barry K."/>
            <person name="Glavina del Rio T."/>
            <person name="Dalin E."/>
            <person name="Tice H."/>
            <person name="Pitluck S."/>
            <person name="Chain P."/>
            <person name="Malfatti S."/>
            <person name="Shin M."/>
            <person name="Vergez L."/>
            <person name="Schmutz J."/>
            <person name="Larimer F."/>
            <person name="Land M."/>
            <person name="Hauser L."/>
            <person name="Kyrpides N."/>
            <person name="Kim E."/>
            <person name="Taghavi S."/>
            <person name="Newman L."/>
            <person name="Vangronsveld J."/>
            <person name="van der Lelie D."/>
            <person name="Richardson P."/>
        </authorList>
    </citation>
    <scope>NUCLEOTIDE SEQUENCE [LARGE SCALE GENOMIC DNA]</scope>
    <source>
        <strain>568</strain>
    </source>
</reference>
<sequence length="595" mass="63138">MTTHCISTGERQRAVKAALGQLPFDLLLTNAALIDMATGEVRNVDVGIVGALIASVHPCGTLTEALQTQDLAGAYLSPGLIDTHVHVESSHLPPERYAEIVVAQGTTTIFWDPHELANVLGVAGVRYAVDASRGLPLRVICAAPSSVPSTPGLEMSGADFAGQEMETMLAWPEVGGVAEVMDMHGVLNGSERMLEILNAGLNSGKLIEGHARGLSGADLQAYLAAGVTSDHELTSGADALEKLRAGLTLEIRGSHPYLLPEIVAALKTLPHLSSQITVCTDDVPPDMLLEKGGIVALLNMLIEQGLPATDVLRMATLNAAIRLQRNDLGLIAAGRVADLVVFDSLTQLRAQQVYVAGKLTAQQGKMQKPLNANPNVAAPRDTLRLQPLAAGDFVLKVPAIRHGKATLRHIKGARFTQWNETTVEVRNGEVQIPQGFSLIWVQHRHGRHQATPQLALLEGWGELRGAIATSYSHDSHNLVVLGRDAADMALAANALIASGGGMALSQNGEILAQVAMPIAGMLSDLPAAELAQQFKNLRDLSARIADWEPPYRVFKAIEGTCLACNAGPHLTDLGLTDGSTRQIVDPLIACWETPA</sequence>
<keyword id="KW-0378">Hydrolase</keyword>
<keyword id="KW-0464">Manganese</keyword>
<accession>A8GAT0</accession>